<protein>
    <recommendedName>
        <fullName evidence="1">Large ribosomal subunit protein bL28</fullName>
    </recommendedName>
    <alternativeName>
        <fullName evidence="2">50S ribosomal protein L28</fullName>
    </alternativeName>
</protein>
<gene>
    <name evidence="1" type="primary">rpmB</name>
    <name type="ordered locus">BUAP5A_085</name>
</gene>
<feature type="chain" id="PRO_1000195909" description="Large ribosomal subunit protein bL28">
    <location>
        <begin position="1"/>
        <end position="75"/>
    </location>
</feature>
<name>RL28_BUCA5</name>
<proteinExistence type="inferred from homology"/>
<sequence>MSRICQITGKKRMIGNNRSHALNATKRKFLINIQYHRFWIADEKRFIKLRVSTNGMRYIDKKGIETVIRKINMKK</sequence>
<evidence type="ECO:0000255" key="1">
    <source>
        <dbReference type="HAMAP-Rule" id="MF_00373"/>
    </source>
</evidence>
<evidence type="ECO:0000305" key="2"/>
<organism>
    <name type="scientific">Buchnera aphidicola subsp. Acyrthosiphon pisum (strain 5A)</name>
    <dbReference type="NCBI Taxonomy" id="563178"/>
    <lineage>
        <taxon>Bacteria</taxon>
        <taxon>Pseudomonadati</taxon>
        <taxon>Pseudomonadota</taxon>
        <taxon>Gammaproteobacteria</taxon>
        <taxon>Enterobacterales</taxon>
        <taxon>Erwiniaceae</taxon>
        <taxon>Buchnera</taxon>
    </lineage>
</organism>
<reference key="1">
    <citation type="journal article" date="2009" name="Science">
        <title>The dynamics and time scale of ongoing genomic erosion in symbiotic bacteria.</title>
        <authorList>
            <person name="Moran N.A."/>
            <person name="McLaughlin H.J."/>
            <person name="Sorek R."/>
        </authorList>
    </citation>
    <scope>NUCLEOTIDE SEQUENCE [LARGE SCALE GENOMIC DNA]</scope>
    <source>
        <strain>5A</strain>
    </source>
</reference>
<dbReference type="EMBL" id="CP001161">
    <property type="protein sequence ID" value="ACL30462.1"/>
    <property type="molecule type" value="Genomic_DNA"/>
</dbReference>
<dbReference type="RefSeq" id="WP_009874039.1">
    <property type="nucleotide sequence ID" value="NC_011833.1"/>
</dbReference>
<dbReference type="SMR" id="B8D8P0"/>
<dbReference type="KEGG" id="bap:BUAP5A_085"/>
<dbReference type="HOGENOM" id="CLU_064548_3_1_6"/>
<dbReference type="OrthoDB" id="9805609at2"/>
<dbReference type="Proteomes" id="UP000006904">
    <property type="component" value="Chromosome"/>
</dbReference>
<dbReference type="GO" id="GO:0022625">
    <property type="term" value="C:cytosolic large ribosomal subunit"/>
    <property type="evidence" value="ECO:0007669"/>
    <property type="project" value="TreeGrafter"/>
</dbReference>
<dbReference type="GO" id="GO:0003735">
    <property type="term" value="F:structural constituent of ribosome"/>
    <property type="evidence" value="ECO:0007669"/>
    <property type="project" value="InterPro"/>
</dbReference>
<dbReference type="GO" id="GO:0006412">
    <property type="term" value="P:translation"/>
    <property type="evidence" value="ECO:0007669"/>
    <property type="project" value="UniProtKB-UniRule"/>
</dbReference>
<dbReference type="FunFam" id="2.30.170.40:FF:000001">
    <property type="entry name" value="50S ribosomal protein L28"/>
    <property type="match status" value="1"/>
</dbReference>
<dbReference type="Gene3D" id="2.30.170.40">
    <property type="entry name" value="Ribosomal protein L28/L24"/>
    <property type="match status" value="1"/>
</dbReference>
<dbReference type="HAMAP" id="MF_00373">
    <property type="entry name" value="Ribosomal_bL28"/>
    <property type="match status" value="1"/>
</dbReference>
<dbReference type="InterPro" id="IPR026569">
    <property type="entry name" value="Ribosomal_bL28"/>
</dbReference>
<dbReference type="InterPro" id="IPR034704">
    <property type="entry name" value="Ribosomal_bL28/bL31-like_sf"/>
</dbReference>
<dbReference type="InterPro" id="IPR001383">
    <property type="entry name" value="Ribosomal_bL28_bact-type"/>
</dbReference>
<dbReference type="InterPro" id="IPR037147">
    <property type="entry name" value="Ribosomal_bL28_sf"/>
</dbReference>
<dbReference type="NCBIfam" id="TIGR00009">
    <property type="entry name" value="L28"/>
    <property type="match status" value="1"/>
</dbReference>
<dbReference type="PANTHER" id="PTHR13528">
    <property type="entry name" value="39S RIBOSOMAL PROTEIN L28, MITOCHONDRIAL"/>
    <property type="match status" value="1"/>
</dbReference>
<dbReference type="PANTHER" id="PTHR13528:SF2">
    <property type="entry name" value="LARGE RIBOSOMAL SUBUNIT PROTEIN BL28M"/>
    <property type="match status" value="1"/>
</dbReference>
<dbReference type="Pfam" id="PF00830">
    <property type="entry name" value="Ribosomal_L28"/>
    <property type="match status" value="1"/>
</dbReference>
<dbReference type="SUPFAM" id="SSF143800">
    <property type="entry name" value="L28p-like"/>
    <property type="match status" value="1"/>
</dbReference>
<comment type="similarity">
    <text evidence="1">Belongs to the bacterial ribosomal protein bL28 family.</text>
</comment>
<keyword id="KW-0687">Ribonucleoprotein</keyword>
<keyword id="KW-0689">Ribosomal protein</keyword>
<accession>B8D8P0</accession>